<proteinExistence type="inferred from homology"/>
<accession>P96669</accession>
<accession>Q797H9</accession>
<dbReference type="EMBL" id="AB001488">
    <property type="protein sequence ID" value="BAA19359.1"/>
    <property type="molecule type" value="Genomic_DNA"/>
</dbReference>
<dbReference type="EMBL" id="AL009126">
    <property type="protein sequence ID" value="CAB12331.1"/>
    <property type="molecule type" value="Genomic_DNA"/>
</dbReference>
<dbReference type="PIR" id="F69778">
    <property type="entry name" value="F69778"/>
</dbReference>
<dbReference type="RefSeq" id="NP_388405.1">
    <property type="nucleotide sequence ID" value="NC_000964.3"/>
</dbReference>
<dbReference type="RefSeq" id="WP_003234223.1">
    <property type="nucleotide sequence ID" value="NZ_OZ025638.1"/>
</dbReference>
<dbReference type="SMR" id="P96669"/>
<dbReference type="FunCoup" id="P96669">
    <property type="interactions" value="35"/>
</dbReference>
<dbReference type="IntAct" id="P96669">
    <property type="interactions" value="17"/>
</dbReference>
<dbReference type="STRING" id="224308.BSU05240"/>
<dbReference type="PaxDb" id="224308-BSU05240"/>
<dbReference type="EnsemblBacteria" id="CAB12331">
    <property type="protein sequence ID" value="CAB12331"/>
    <property type="gene ID" value="BSU_05240"/>
</dbReference>
<dbReference type="GeneID" id="939904"/>
<dbReference type="KEGG" id="bsu:BSU05240"/>
<dbReference type="PATRIC" id="fig|224308.179.peg.559"/>
<dbReference type="eggNOG" id="COG1167">
    <property type="taxonomic scope" value="Bacteria"/>
</dbReference>
<dbReference type="InParanoid" id="P96669"/>
<dbReference type="OrthoDB" id="9808770at2"/>
<dbReference type="PhylomeDB" id="P96669"/>
<dbReference type="BioCyc" id="BSUB:BSU05240-MONOMER"/>
<dbReference type="Proteomes" id="UP000001570">
    <property type="component" value="Chromosome"/>
</dbReference>
<dbReference type="GO" id="GO:0003677">
    <property type="term" value="F:DNA binding"/>
    <property type="evidence" value="ECO:0007669"/>
    <property type="project" value="UniProtKB-KW"/>
</dbReference>
<dbReference type="GO" id="GO:0003700">
    <property type="term" value="F:DNA-binding transcription factor activity"/>
    <property type="evidence" value="ECO:0007669"/>
    <property type="project" value="InterPro"/>
</dbReference>
<dbReference type="GO" id="GO:0030170">
    <property type="term" value="F:pyridoxal phosphate binding"/>
    <property type="evidence" value="ECO:0007669"/>
    <property type="project" value="InterPro"/>
</dbReference>
<dbReference type="GO" id="GO:0008483">
    <property type="term" value="F:transaminase activity"/>
    <property type="evidence" value="ECO:0007669"/>
    <property type="project" value="UniProtKB-KW"/>
</dbReference>
<dbReference type="GO" id="GO:0009058">
    <property type="term" value="P:biosynthetic process"/>
    <property type="evidence" value="ECO:0007669"/>
    <property type="project" value="InterPro"/>
</dbReference>
<dbReference type="CDD" id="cd00609">
    <property type="entry name" value="AAT_like"/>
    <property type="match status" value="1"/>
</dbReference>
<dbReference type="CDD" id="cd07377">
    <property type="entry name" value="WHTH_GntR"/>
    <property type="match status" value="1"/>
</dbReference>
<dbReference type="Gene3D" id="3.40.640.10">
    <property type="entry name" value="Type I PLP-dependent aspartate aminotransferase-like (Major domain)"/>
    <property type="match status" value="1"/>
</dbReference>
<dbReference type="Gene3D" id="1.10.10.10">
    <property type="entry name" value="Winged helix-like DNA-binding domain superfamily/Winged helix DNA-binding domain"/>
    <property type="match status" value="1"/>
</dbReference>
<dbReference type="InterPro" id="IPR004839">
    <property type="entry name" value="Aminotransferase_I/II_large"/>
</dbReference>
<dbReference type="InterPro" id="IPR051446">
    <property type="entry name" value="HTH_trans_reg/aminotransferase"/>
</dbReference>
<dbReference type="InterPro" id="IPR015424">
    <property type="entry name" value="PyrdxlP-dep_Trfase"/>
</dbReference>
<dbReference type="InterPro" id="IPR015421">
    <property type="entry name" value="PyrdxlP-dep_Trfase_major"/>
</dbReference>
<dbReference type="InterPro" id="IPR000524">
    <property type="entry name" value="Tscrpt_reg_HTH_GntR"/>
</dbReference>
<dbReference type="InterPro" id="IPR036388">
    <property type="entry name" value="WH-like_DNA-bd_sf"/>
</dbReference>
<dbReference type="InterPro" id="IPR036390">
    <property type="entry name" value="WH_DNA-bd_sf"/>
</dbReference>
<dbReference type="PANTHER" id="PTHR46577">
    <property type="entry name" value="HTH-TYPE TRANSCRIPTIONAL REGULATORY PROTEIN GABR"/>
    <property type="match status" value="1"/>
</dbReference>
<dbReference type="PANTHER" id="PTHR46577:SF1">
    <property type="entry name" value="HTH-TYPE TRANSCRIPTIONAL REGULATORY PROTEIN GABR"/>
    <property type="match status" value="1"/>
</dbReference>
<dbReference type="Pfam" id="PF00155">
    <property type="entry name" value="Aminotran_1_2"/>
    <property type="match status" value="1"/>
</dbReference>
<dbReference type="Pfam" id="PF00392">
    <property type="entry name" value="GntR"/>
    <property type="match status" value="1"/>
</dbReference>
<dbReference type="PRINTS" id="PR00035">
    <property type="entry name" value="HTHGNTR"/>
</dbReference>
<dbReference type="SMART" id="SM00345">
    <property type="entry name" value="HTH_GNTR"/>
    <property type="match status" value="1"/>
</dbReference>
<dbReference type="SUPFAM" id="SSF53383">
    <property type="entry name" value="PLP-dependent transferases"/>
    <property type="match status" value="1"/>
</dbReference>
<dbReference type="SUPFAM" id="SSF46785">
    <property type="entry name" value="Winged helix' DNA-binding domain"/>
    <property type="match status" value="1"/>
</dbReference>
<dbReference type="PROSITE" id="PS50949">
    <property type="entry name" value="HTH_GNTR"/>
    <property type="match status" value="1"/>
</dbReference>
<keyword id="KW-0032">Aminotransferase</keyword>
<keyword id="KW-0238">DNA-binding</keyword>
<keyword id="KW-0663">Pyridoxal phosphate</keyword>
<keyword id="KW-1185">Reference proteome</keyword>
<keyword id="KW-0804">Transcription</keyword>
<keyword id="KW-0805">Transcription regulation</keyword>
<keyword id="KW-0808">Transferase</keyword>
<sequence length="463" mass="53525">MDITPFLNRTLDIPLYQQLYRYFKENMHRGRIQKGMKLPSKRLLANQLSISQTTVERAYEQLAAEGYIVSKPRSGWFADYHDSDFAYDRMPSTTPIQQEAEENKQWIDFHYGNVDSSYFPFSAWRKSMVNSLDQYGHELYRPGHVLGEFELRTLIAEYLYQSRGVHCGPEQVIIGAGNPILLQILCQVFEPNISIGYEDPGYPRARKIFEANRMNIVPIPVDDEGICIQKIKEQQPNLVYVTPSHQFTLGTIMTINRRIQLLKWAAENQSFIIEDDYDGEFRYTGQPVPSLQGLDQHNRVIYMGTFSKSLLPSLRISYMILPSPLLKKGHEITSLYKQTVSCHSQLTLAEFIKNGEWQKHINRMRKLYRKKRAIVLEAVQRELGEHVRIRGENSGLRILLDVYLPFGEKELIEKAKKHGVKIYPVSLSYQHHPPTKTVSLGFAGVSESDIREGIKKLKAAWKI</sequence>
<reference key="1">
    <citation type="submission" date="1997-03" db="EMBL/GenBank/DDBJ databases">
        <title>A 148 kbp sequence of the region between 35 and 47 degree of the Bacillus subtilis genome.</title>
        <authorList>
            <person name="Kasahara Y."/>
            <person name="Nakai S."/>
            <person name="Lee S."/>
            <person name="Sadaie Y."/>
            <person name="Ogasawara N."/>
        </authorList>
    </citation>
    <scope>NUCLEOTIDE SEQUENCE [GENOMIC DNA]</scope>
    <source>
        <strain>168</strain>
    </source>
</reference>
<reference key="2">
    <citation type="journal article" date="1997" name="Nature">
        <title>The complete genome sequence of the Gram-positive bacterium Bacillus subtilis.</title>
        <authorList>
            <person name="Kunst F."/>
            <person name="Ogasawara N."/>
            <person name="Moszer I."/>
            <person name="Albertini A.M."/>
            <person name="Alloni G."/>
            <person name="Azevedo V."/>
            <person name="Bertero M.G."/>
            <person name="Bessieres P."/>
            <person name="Bolotin A."/>
            <person name="Borchert S."/>
            <person name="Borriss R."/>
            <person name="Boursier L."/>
            <person name="Brans A."/>
            <person name="Braun M."/>
            <person name="Brignell S.C."/>
            <person name="Bron S."/>
            <person name="Brouillet S."/>
            <person name="Bruschi C.V."/>
            <person name="Caldwell B."/>
            <person name="Capuano V."/>
            <person name="Carter N.M."/>
            <person name="Choi S.-K."/>
            <person name="Codani J.-J."/>
            <person name="Connerton I.F."/>
            <person name="Cummings N.J."/>
            <person name="Daniel R.A."/>
            <person name="Denizot F."/>
            <person name="Devine K.M."/>
            <person name="Duesterhoeft A."/>
            <person name="Ehrlich S.D."/>
            <person name="Emmerson P.T."/>
            <person name="Entian K.-D."/>
            <person name="Errington J."/>
            <person name="Fabret C."/>
            <person name="Ferrari E."/>
            <person name="Foulger D."/>
            <person name="Fritz C."/>
            <person name="Fujita M."/>
            <person name="Fujita Y."/>
            <person name="Fuma S."/>
            <person name="Galizzi A."/>
            <person name="Galleron N."/>
            <person name="Ghim S.-Y."/>
            <person name="Glaser P."/>
            <person name="Goffeau A."/>
            <person name="Golightly E.J."/>
            <person name="Grandi G."/>
            <person name="Guiseppi G."/>
            <person name="Guy B.J."/>
            <person name="Haga K."/>
            <person name="Haiech J."/>
            <person name="Harwood C.R."/>
            <person name="Henaut A."/>
            <person name="Hilbert H."/>
            <person name="Holsappel S."/>
            <person name="Hosono S."/>
            <person name="Hullo M.-F."/>
            <person name="Itaya M."/>
            <person name="Jones L.-M."/>
            <person name="Joris B."/>
            <person name="Karamata D."/>
            <person name="Kasahara Y."/>
            <person name="Klaerr-Blanchard M."/>
            <person name="Klein C."/>
            <person name="Kobayashi Y."/>
            <person name="Koetter P."/>
            <person name="Koningstein G."/>
            <person name="Krogh S."/>
            <person name="Kumano M."/>
            <person name="Kurita K."/>
            <person name="Lapidus A."/>
            <person name="Lardinois S."/>
            <person name="Lauber J."/>
            <person name="Lazarevic V."/>
            <person name="Lee S.-M."/>
            <person name="Levine A."/>
            <person name="Liu H."/>
            <person name="Masuda S."/>
            <person name="Mauel C."/>
            <person name="Medigue C."/>
            <person name="Medina N."/>
            <person name="Mellado R.P."/>
            <person name="Mizuno M."/>
            <person name="Moestl D."/>
            <person name="Nakai S."/>
            <person name="Noback M."/>
            <person name="Noone D."/>
            <person name="O'Reilly M."/>
            <person name="Ogawa K."/>
            <person name="Ogiwara A."/>
            <person name="Oudega B."/>
            <person name="Park S.-H."/>
            <person name="Parro V."/>
            <person name="Pohl T.M."/>
            <person name="Portetelle D."/>
            <person name="Porwollik S."/>
            <person name="Prescott A.M."/>
            <person name="Presecan E."/>
            <person name="Pujic P."/>
            <person name="Purnelle B."/>
            <person name="Rapoport G."/>
            <person name="Rey M."/>
            <person name="Reynolds S."/>
            <person name="Rieger M."/>
            <person name="Rivolta C."/>
            <person name="Rocha E."/>
            <person name="Roche B."/>
            <person name="Rose M."/>
            <person name="Sadaie Y."/>
            <person name="Sato T."/>
            <person name="Scanlan E."/>
            <person name="Schleich S."/>
            <person name="Schroeter R."/>
            <person name="Scoffone F."/>
            <person name="Sekiguchi J."/>
            <person name="Sekowska A."/>
            <person name="Seror S.J."/>
            <person name="Serror P."/>
            <person name="Shin B.-S."/>
            <person name="Soldo B."/>
            <person name="Sorokin A."/>
            <person name="Tacconi E."/>
            <person name="Takagi T."/>
            <person name="Takahashi H."/>
            <person name="Takemaru K."/>
            <person name="Takeuchi M."/>
            <person name="Tamakoshi A."/>
            <person name="Tanaka T."/>
            <person name="Terpstra P."/>
            <person name="Tognoni A."/>
            <person name="Tosato V."/>
            <person name="Uchiyama S."/>
            <person name="Vandenbol M."/>
            <person name="Vannier F."/>
            <person name="Vassarotti A."/>
            <person name="Viari A."/>
            <person name="Wambutt R."/>
            <person name="Wedler E."/>
            <person name="Wedler H."/>
            <person name="Weitzenegger T."/>
            <person name="Winters P."/>
            <person name="Wipat A."/>
            <person name="Yamamoto H."/>
            <person name="Yamane K."/>
            <person name="Yasumoto K."/>
            <person name="Yata K."/>
            <person name="Yoshida K."/>
            <person name="Yoshikawa H.-F."/>
            <person name="Zumstein E."/>
            <person name="Yoshikawa H."/>
            <person name="Danchin A."/>
        </authorList>
    </citation>
    <scope>NUCLEOTIDE SEQUENCE [LARGE SCALE GENOMIC DNA]</scope>
    <source>
        <strain>168</strain>
    </source>
</reference>
<reference key="3">
    <citation type="journal article" date="2002" name="Mol. Microbiol.">
        <title>GabR, a member of a novel protein family, regulates the utilization of gamma-aminobutyrate in Bacillus subtilis.</title>
        <authorList>
            <person name="Belitsky B.R."/>
            <person name="Sonenshein A.L."/>
        </authorList>
    </citation>
    <scope>GENE FAMILY</scope>
</reference>
<gene>
    <name type="primary">ydeL</name>
    <name type="ordered locus">BSU05240</name>
</gene>
<protein>
    <recommendedName>
        <fullName>Uncharacterized HTH-type transcriptional regulator YdeL</fullName>
    </recommendedName>
</protein>
<organism>
    <name type="scientific">Bacillus subtilis (strain 168)</name>
    <dbReference type="NCBI Taxonomy" id="224308"/>
    <lineage>
        <taxon>Bacteria</taxon>
        <taxon>Bacillati</taxon>
        <taxon>Bacillota</taxon>
        <taxon>Bacilli</taxon>
        <taxon>Bacillales</taxon>
        <taxon>Bacillaceae</taxon>
        <taxon>Bacillus</taxon>
    </lineage>
</organism>
<evidence type="ECO:0000250" key="1"/>
<evidence type="ECO:0000255" key="2">
    <source>
        <dbReference type="PROSITE-ProRule" id="PRU00307"/>
    </source>
</evidence>
<evidence type="ECO:0000305" key="3"/>
<name>YDEL_BACSU</name>
<feature type="chain" id="PRO_0000360696" description="Uncharacterized HTH-type transcriptional regulator YdeL">
    <location>
        <begin position="1"/>
        <end position="463"/>
    </location>
</feature>
<feature type="domain" description="HTH gntR-type" evidence="2">
    <location>
        <begin position="13"/>
        <end position="81"/>
    </location>
</feature>
<feature type="DNA-binding region" description="H-T-H motif" evidence="2">
    <location>
        <begin position="41"/>
        <end position="60"/>
    </location>
</feature>
<feature type="modified residue" description="N6-(pyridoxal phosphate)lysine" evidence="1">
    <location>
        <position position="308"/>
    </location>
</feature>
<comment type="cofactor">
    <cofactor evidence="1">
        <name>pyridoxal 5'-phosphate</name>
        <dbReference type="ChEBI" id="CHEBI:597326"/>
    </cofactor>
</comment>
<comment type="similarity">
    <text evidence="3">In the C-terminal section; belongs to the class-I pyridoxal-phosphate-dependent aminotransferase family.</text>
</comment>